<comment type="function">
    <text evidence="1">Catalyzes the conversion of glucosamine-6-phosphate to glucosamine-1-phosphate.</text>
</comment>
<comment type="catalytic activity">
    <reaction evidence="1">
        <text>alpha-D-glucosamine 1-phosphate = D-glucosamine 6-phosphate</text>
        <dbReference type="Rhea" id="RHEA:23424"/>
        <dbReference type="ChEBI" id="CHEBI:58516"/>
        <dbReference type="ChEBI" id="CHEBI:58725"/>
        <dbReference type="EC" id="5.4.2.10"/>
    </reaction>
</comment>
<comment type="cofactor">
    <cofactor evidence="1">
        <name>Mg(2+)</name>
        <dbReference type="ChEBI" id="CHEBI:18420"/>
    </cofactor>
    <text evidence="1">Binds 1 Mg(2+) ion per subunit.</text>
</comment>
<comment type="PTM">
    <text evidence="1">Activated by phosphorylation.</text>
</comment>
<comment type="similarity">
    <text evidence="1">Belongs to the phosphohexose mutase family.</text>
</comment>
<sequence length="445" mass="47544">MSNRKYFGTDGIRGRVGDAPITPDFVLKLGWAAGKVLARHGSRKIIIGKDTRISGYMLESALEAGLAAAGLSALFTGPMPTPAVAYLTRTFRAEAGIVISASHNPFYDNGIKFFSIDGTKLPDAVEEAIEAEMEKEISCVDSAELGKASRIVDAAGRYIEFCKATFPNELSLSELKIVVDCANGATYHIAPNVLRELGANVIAIGCEPNGVNINAEVGATDVRALQARVLAEKADLGIAFDGDGDRVIMVDHEGNKVDGDQIMYIIAREGLRQGQLRGGAVGTLMSNMGLELALKQLGIPFARAKVGDRYVLEKMQEKGWRIGAENSGHVILLDKTTTGDGIVAGLQVLAAMARNHMSLHDLCSGMKMFPQILVNVRYTAGSGDPLEHESVKAVTAEVEAALGNRGRVLLRKSGTEPLIRVMVEGEDEAQVTEFAHRIADAVKAV</sequence>
<feature type="chain" id="PRO_1000068904" description="Phosphoglucosamine mutase">
    <location>
        <begin position="1"/>
        <end position="445"/>
    </location>
</feature>
<feature type="active site" description="Phosphoserine intermediate" evidence="1">
    <location>
        <position position="102"/>
    </location>
</feature>
<feature type="binding site" description="via phosphate group" evidence="1">
    <location>
        <position position="102"/>
    </location>
    <ligand>
        <name>Mg(2+)</name>
        <dbReference type="ChEBI" id="CHEBI:18420"/>
    </ligand>
</feature>
<feature type="binding site" evidence="1">
    <location>
        <position position="241"/>
    </location>
    <ligand>
        <name>Mg(2+)</name>
        <dbReference type="ChEBI" id="CHEBI:18420"/>
    </ligand>
</feature>
<feature type="binding site" evidence="1">
    <location>
        <position position="243"/>
    </location>
    <ligand>
        <name>Mg(2+)</name>
        <dbReference type="ChEBI" id="CHEBI:18420"/>
    </ligand>
</feature>
<feature type="binding site" evidence="1">
    <location>
        <position position="245"/>
    </location>
    <ligand>
        <name>Mg(2+)</name>
        <dbReference type="ChEBI" id="CHEBI:18420"/>
    </ligand>
</feature>
<feature type="modified residue" description="Phosphoserine" evidence="1">
    <location>
        <position position="102"/>
    </location>
</feature>
<organism>
    <name type="scientific">Escherichia coli O9:H4 (strain HS)</name>
    <dbReference type="NCBI Taxonomy" id="331112"/>
    <lineage>
        <taxon>Bacteria</taxon>
        <taxon>Pseudomonadati</taxon>
        <taxon>Pseudomonadota</taxon>
        <taxon>Gammaproteobacteria</taxon>
        <taxon>Enterobacterales</taxon>
        <taxon>Enterobacteriaceae</taxon>
        <taxon>Escherichia</taxon>
    </lineage>
</organism>
<keyword id="KW-0413">Isomerase</keyword>
<keyword id="KW-0460">Magnesium</keyword>
<keyword id="KW-0479">Metal-binding</keyword>
<keyword id="KW-0597">Phosphoprotein</keyword>
<name>GLMM_ECOHS</name>
<gene>
    <name evidence="1" type="primary">glmM</name>
    <name type="ordered locus">EcHS_A3368</name>
</gene>
<accession>A8A4Z0</accession>
<reference key="1">
    <citation type="journal article" date="2008" name="J. Bacteriol.">
        <title>The pangenome structure of Escherichia coli: comparative genomic analysis of E. coli commensal and pathogenic isolates.</title>
        <authorList>
            <person name="Rasko D.A."/>
            <person name="Rosovitz M.J."/>
            <person name="Myers G.S.A."/>
            <person name="Mongodin E.F."/>
            <person name="Fricke W.F."/>
            <person name="Gajer P."/>
            <person name="Crabtree J."/>
            <person name="Sebaihia M."/>
            <person name="Thomson N.R."/>
            <person name="Chaudhuri R."/>
            <person name="Henderson I.R."/>
            <person name="Sperandio V."/>
            <person name="Ravel J."/>
        </authorList>
    </citation>
    <scope>NUCLEOTIDE SEQUENCE [LARGE SCALE GENOMIC DNA]</scope>
    <source>
        <strain>HS</strain>
    </source>
</reference>
<proteinExistence type="inferred from homology"/>
<evidence type="ECO:0000255" key="1">
    <source>
        <dbReference type="HAMAP-Rule" id="MF_01554"/>
    </source>
</evidence>
<dbReference type="EC" id="5.4.2.10" evidence="1"/>
<dbReference type="EMBL" id="CP000802">
    <property type="protein sequence ID" value="ABV07594.1"/>
    <property type="molecule type" value="Genomic_DNA"/>
</dbReference>
<dbReference type="RefSeq" id="WP_000071134.1">
    <property type="nucleotide sequence ID" value="NC_009800.1"/>
</dbReference>
<dbReference type="SMR" id="A8A4Z0"/>
<dbReference type="GeneID" id="75206032"/>
<dbReference type="KEGG" id="ecx:EcHS_A3368"/>
<dbReference type="HOGENOM" id="CLU_016950_7_0_6"/>
<dbReference type="GO" id="GO:0005829">
    <property type="term" value="C:cytosol"/>
    <property type="evidence" value="ECO:0007669"/>
    <property type="project" value="TreeGrafter"/>
</dbReference>
<dbReference type="GO" id="GO:0000287">
    <property type="term" value="F:magnesium ion binding"/>
    <property type="evidence" value="ECO:0007669"/>
    <property type="project" value="UniProtKB-UniRule"/>
</dbReference>
<dbReference type="GO" id="GO:0008966">
    <property type="term" value="F:phosphoglucosamine mutase activity"/>
    <property type="evidence" value="ECO:0007669"/>
    <property type="project" value="UniProtKB-UniRule"/>
</dbReference>
<dbReference type="GO" id="GO:0004615">
    <property type="term" value="F:phosphomannomutase activity"/>
    <property type="evidence" value="ECO:0007669"/>
    <property type="project" value="TreeGrafter"/>
</dbReference>
<dbReference type="GO" id="GO:0005975">
    <property type="term" value="P:carbohydrate metabolic process"/>
    <property type="evidence" value="ECO:0007669"/>
    <property type="project" value="InterPro"/>
</dbReference>
<dbReference type="GO" id="GO:0009252">
    <property type="term" value="P:peptidoglycan biosynthetic process"/>
    <property type="evidence" value="ECO:0007669"/>
    <property type="project" value="TreeGrafter"/>
</dbReference>
<dbReference type="GO" id="GO:0006048">
    <property type="term" value="P:UDP-N-acetylglucosamine biosynthetic process"/>
    <property type="evidence" value="ECO:0007669"/>
    <property type="project" value="TreeGrafter"/>
</dbReference>
<dbReference type="CDD" id="cd05802">
    <property type="entry name" value="GlmM"/>
    <property type="match status" value="1"/>
</dbReference>
<dbReference type="FunFam" id="3.30.310.50:FF:000001">
    <property type="entry name" value="Phosphoglucosamine mutase"/>
    <property type="match status" value="1"/>
</dbReference>
<dbReference type="FunFam" id="3.40.120.10:FF:000001">
    <property type="entry name" value="Phosphoglucosamine mutase"/>
    <property type="match status" value="1"/>
</dbReference>
<dbReference type="FunFam" id="3.40.120.10:FF:000002">
    <property type="entry name" value="Phosphoglucosamine mutase"/>
    <property type="match status" value="1"/>
</dbReference>
<dbReference type="Gene3D" id="3.40.120.10">
    <property type="entry name" value="Alpha-D-Glucose-1,6-Bisphosphate, subunit A, domain 3"/>
    <property type="match status" value="3"/>
</dbReference>
<dbReference type="Gene3D" id="3.30.310.50">
    <property type="entry name" value="Alpha-D-phosphohexomutase, C-terminal domain"/>
    <property type="match status" value="1"/>
</dbReference>
<dbReference type="HAMAP" id="MF_01554_B">
    <property type="entry name" value="GlmM_B"/>
    <property type="match status" value="1"/>
</dbReference>
<dbReference type="InterPro" id="IPR005844">
    <property type="entry name" value="A-D-PHexomutase_a/b/a-I"/>
</dbReference>
<dbReference type="InterPro" id="IPR016055">
    <property type="entry name" value="A-D-PHexomutase_a/b/a-I/II/III"/>
</dbReference>
<dbReference type="InterPro" id="IPR005845">
    <property type="entry name" value="A-D-PHexomutase_a/b/a-II"/>
</dbReference>
<dbReference type="InterPro" id="IPR005846">
    <property type="entry name" value="A-D-PHexomutase_a/b/a-III"/>
</dbReference>
<dbReference type="InterPro" id="IPR005843">
    <property type="entry name" value="A-D-PHexomutase_C"/>
</dbReference>
<dbReference type="InterPro" id="IPR036900">
    <property type="entry name" value="A-D-PHexomutase_C_sf"/>
</dbReference>
<dbReference type="InterPro" id="IPR016066">
    <property type="entry name" value="A-D-PHexomutase_CS"/>
</dbReference>
<dbReference type="InterPro" id="IPR005841">
    <property type="entry name" value="Alpha-D-phosphohexomutase_SF"/>
</dbReference>
<dbReference type="InterPro" id="IPR006352">
    <property type="entry name" value="GlmM_bact"/>
</dbReference>
<dbReference type="InterPro" id="IPR050060">
    <property type="entry name" value="Phosphoglucosamine_mutase"/>
</dbReference>
<dbReference type="NCBIfam" id="TIGR01455">
    <property type="entry name" value="glmM"/>
    <property type="match status" value="1"/>
</dbReference>
<dbReference type="NCBIfam" id="NF008139">
    <property type="entry name" value="PRK10887.1"/>
    <property type="match status" value="1"/>
</dbReference>
<dbReference type="PANTHER" id="PTHR42946:SF1">
    <property type="entry name" value="PHOSPHOGLUCOMUTASE (ALPHA-D-GLUCOSE-1,6-BISPHOSPHATE-DEPENDENT)"/>
    <property type="match status" value="1"/>
</dbReference>
<dbReference type="PANTHER" id="PTHR42946">
    <property type="entry name" value="PHOSPHOHEXOSE MUTASE"/>
    <property type="match status" value="1"/>
</dbReference>
<dbReference type="Pfam" id="PF02878">
    <property type="entry name" value="PGM_PMM_I"/>
    <property type="match status" value="1"/>
</dbReference>
<dbReference type="Pfam" id="PF02879">
    <property type="entry name" value="PGM_PMM_II"/>
    <property type="match status" value="1"/>
</dbReference>
<dbReference type="Pfam" id="PF02880">
    <property type="entry name" value="PGM_PMM_III"/>
    <property type="match status" value="1"/>
</dbReference>
<dbReference type="Pfam" id="PF00408">
    <property type="entry name" value="PGM_PMM_IV"/>
    <property type="match status" value="1"/>
</dbReference>
<dbReference type="PRINTS" id="PR00509">
    <property type="entry name" value="PGMPMM"/>
</dbReference>
<dbReference type="SUPFAM" id="SSF55957">
    <property type="entry name" value="Phosphoglucomutase, C-terminal domain"/>
    <property type="match status" value="1"/>
</dbReference>
<dbReference type="SUPFAM" id="SSF53738">
    <property type="entry name" value="Phosphoglucomutase, first 3 domains"/>
    <property type="match status" value="3"/>
</dbReference>
<dbReference type="PROSITE" id="PS00710">
    <property type="entry name" value="PGM_PMM"/>
    <property type="match status" value="1"/>
</dbReference>
<protein>
    <recommendedName>
        <fullName evidence="1">Phosphoglucosamine mutase</fullName>
        <ecNumber evidence="1">5.4.2.10</ecNumber>
    </recommendedName>
</protein>